<evidence type="ECO:0000255" key="1">
    <source>
        <dbReference type="HAMAP-Rule" id="MF_01221"/>
    </source>
</evidence>
<name>Y289_STRZP</name>
<dbReference type="EMBL" id="CP000920">
    <property type="protein sequence ID" value="ACO21303.1"/>
    <property type="molecule type" value="Genomic_DNA"/>
</dbReference>
<dbReference type="RefSeq" id="WP_000354898.1">
    <property type="nucleotide sequence ID" value="NC_012467.1"/>
</dbReference>
<dbReference type="SMR" id="C1CIC6"/>
<dbReference type="KEGG" id="spp:SPP_0289"/>
<dbReference type="HOGENOM" id="CLU_048704_0_0_9"/>
<dbReference type="CDD" id="cd08025">
    <property type="entry name" value="RNR_PFL_like_DUF711"/>
    <property type="match status" value="1"/>
</dbReference>
<dbReference type="Gene3D" id="3.20.70.20">
    <property type="match status" value="1"/>
</dbReference>
<dbReference type="HAMAP" id="MF_01221">
    <property type="entry name" value="UPF0210"/>
    <property type="match status" value="1"/>
</dbReference>
<dbReference type="InterPro" id="IPR007841">
    <property type="entry name" value="UPF0210"/>
</dbReference>
<dbReference type="NCBIfam" id="NF003700">
    <property type="entry name" value="PRK05313.1"/>
    <property type="match status" value="1"/>
</dbReference>
<dbReference type="PANTHER" id="PTHR37560:SF1">
    <property type="entry name" value="UPF0210 PROTEIN MJ1665"/>
    <property type="match status" value="1"/>
</dbReference>
<dbReference type="PANTHER" id="PTHR37560">
    <property type="entry name" value="UPF0210 PROTEIN SPR0218"/>
    <property type="match status" value="1"/>
</dbReference>
<dbReference type="Pfam" id="PF05167">
    <property type="entry name" value="DUF711"/>
    <property type="match status" value="1"/>
</dbReference>
<dbReference type="SUPFAM" id="SSF51998">
    <property type="entry name" value="PFL-like glycyl radical enzymes"/>
    <property type="match status" value="1"/>
</dbReference>
<protein>
    <recommendedName>
        <fullName evidence="1">UPF0210 protein SPP_0289</fullName>
    </recommendedName>
</protein>
<gene>
    <name type="ordered locus">SPP_0289</name>
</gene>
<feature type="chain" id="PRO_1000164872" description="UPF0210 protein SPP_0289">
    <location>
        <begin position="1"/>
        <end position="445"/>
    </location>
</feature>
<proteinExistence type="inferred from homology"/>
<reference key="1">
    <citation type="journal article" date="2010" name="Genome Biol.">
        <title>Structure and dynamics of the pan-genome of Streptococcus pneumoniae and closely related species.</title>
        <authorList>
            <person name="Donati C."/>
            <person name="Hiller N.L."/>
            <person name="Tettelin H."/>
            <person name="Muzzi A."/>
            <person name="Croucher N.J."/>
            <person name="Angiuoli S.V."/>
            <person name="Oggioni M."/>
            <person name="Dunning Hotopp J.C."/>
            <person name="Hu F.Z."/>
            <person name="Riley D.R."/>
            <person name="Covacci A."/>
            <person name="Mitchell T.J."/>
            <person name="Bentley S.D."/>
            <person name="Kilian M."/>
            <person name="Ehrlich G.D."/>
            <person name="Rappuoli R."/>
            <person name="Moxon E.R."/>
            <person name="Masignani V."/>
        </authorList>
    </citation>
    <scope>NUCLEOTIDE SEQUENCE [LARGE SCALE GENOMIC DNA]</scope>
    <source>
        <strain>P1031</strain>
    </source>
</reference>
<organism>
    <name type="scientific">Streptococcus pneumoniae (strain P1031)</name>
    <dbReference type="NCBI Taxonomy" id="488223"/>
    <lineage>
        <taxon>Bacteria</taxon>
        <taxon>Bacillati</taxon>
        <taxon>Bacillota</taxon>
        <taxon>Bacilli</taxon>
        <taxon>Lactobacillales</taxon>
        <taxon>Streptococcaceae</taxon>
        <taxon>Streptococcus</taxon>
    </lineage>
</organism>
<sequence>MDIRQVTETIAMIEEQNFDIRTITMGISLLDCIDPDINRAAEKIYQKITTKAANLVAVGDEIAAELGIPIVNKRVSVTPISLIGAATDATDYVVLAKALDKAAKEIGVDFIGGFSALVQKGYQKGDEILINSIPRALAETDKVCSSVNIGSTKSGINMTAVADMGRIIKETANLSDMGVAKLVVFANAVEDNPFMAGAFHGVGEADVIINVGVSGPGVVKRALEKVRGQSFDVVAETVKKTAFKITRIGQLVGQMASERLGVEFGIVDLSLAPTPAVGDSVARVLEEMGLETVGTHGTTAALALLNDQVKKGGVMACNQVGGLSGAFIPVSEDEGMIAAVQNGSLNLEKLEAMTAICSVGLDMIAIPEDTPAETIAAMIADEAAIGVINMKTTAVRIIPKGREGDMIEFGGLLGTAPVMKVNGASSVDFISRGGQIPAPIHSFKN</sequence>
<comment type="subunit">
    <text evidence="1">Homodimer.</text>
</comment>
<comment type="similarity">
    <text evidence="1">Belongs to the UPF0210 family.</text>
</comment>
<accession>C1CIC6</accession>